<accession>B2WIC3</accession>
<sequence>MSDDATIPITIEFSGGLEILFANQKKYNLSLPTKDESGEPATVAFLVRYLCDHIMKDPRKELFVLDDTVRPGILVLINEADWELEGEDKYQVQKDDHIMFVSTLHGG</sequence>
<dbReference type="EMBL" id="DS231626">
    <property type="protein sequence ID" value="EDU42783.1"/>
    <property type="molecule type" value="Genomic_DNA"/>
</dbReference>
<dbReference type="RefSeq" id="XP_001940064.1">
    <property type="nucleotide sequence ID" value="XM_001940029.1"/>
</dbReference>
<dbReference type="SMR" id="B2WIC3"/>
<dbReference type="FunCoup" id="B2WIC3">
    <property type="interactions" value="857"/>
</dbReference>
<dbReference type="STRING" id="426418.B2WIC3"/>
<dbReference type="EnsemblFungi" id="EDU42783">
    <property type="protein sequence ID" value="EDU42783"/>
    <property type="gene ID" value="PTRG_09732"/>
</dbReference>
<dbReference type="GeneID" id="6348026"/>
<dbReference type="KEGG" id="ptrr:6348026"/>
<dbReference type="eggNOG" id="KOG4146">
    <property type="taxonomic scope" value="Eukaryota"/>
</dbReference>
<dbReference type="HOGENOM" id="CLU_148208_0_0_1"/>
<dbReference type="InParanoid" id="B2WIC3"/>
<dbReference type="OMA" id="DYELQPN"/>
<dbReference type="OrthoDB" id="4520at28556"/>
<dbReference type="UniPathway" id="UPA00988"/>
<dbReference type="Proteomes" id="UP000001471">
    <property type="component" value="Unassembled WGS sequence"/>
</dbReference>
<dbReference type="GO" id="GO:0005829">
    <property type="term" value="C:cytosol"/>
    <property type="evidence" value="ECO:0007669"/>
    <property type="project" value="UniProtKB-UniRule"/>
</dbReference>
<dbReference type="GO" id="GO:0032447">
    <property type="term" value="P:protein urmylation"/>
    <property type="evidence" value="ECO:0007669"/>
    <property type="project" value="UniProtKB-UniRule"/>
</dbReference>
<dbReference type="GO" id="GO:0034227">
    <property type="term" value="P:tRNA thio-modification"/>
    <property type="evidence" value="ECO:0007669"/>
    <property type="project" value="UniProtKB-UniRule"/>
</dbReference>
<dbReference type="GO" id="GO:0002098">
    <property type="term" value="P:tRNA wobble uridine modification"/>
    <property type="evidence" value="ECO:0007669"/>
    <property type="project" value="UniProtKB-UniRule"/>
</dbReference>
<dbReference type="CDD" id="cd01764">
    <property type="entry name" value="Ubl_Urm1"/>
    <property type="match status" value="1"/>
</dbReference>
<dbReference type="Gene3D" id="3.10.20.30">
    <property type="match status" value="1"/>
</dbReference>
<dbReference type="HAMAP" id="MF_03048">
    <property type="entry name" value="Urm1"/>
    <property type="match status" value="1"/>
</dbReference>
<dbReference type="InterPro" id="IPR012675">
    <property type="entry name" value="Beta-grasp_dom_sf"/>
</dbReference>
<dbReference type="InterPro" id="IPR016155">
    <property type="entry name" value="Mopterin_synth/thiamin_S_b"/>
</dbReference>
<dbReference type="InterPro" id="IPR015221">
    <property type="entry name" value="Urm1"/>
</dbReference>
<dbReference type="PANTHER" id="PTHR14986">
    <property type="entry name" value="RURM1 PROTEIN"/>
    <property type="match status" value="1"/>
</dbReference>
<dbReference type="Pfam" id="PF09138">
    <property type="entry name" value="Urm1"/>
    <property type="match status" value="1"/>
</dbReference>
<dbReference type="PIRSF" id="PIRSF037379">
    <property type="entry name" value="Ubiquitin-related_modifier_1"/>
    <property type="match status" value="1"/>
</dbReference>
<dbReference type="SUPFAM" id="SSF54285">
    <property type="entry name" value="MoaD/ThiS"/>
    <property type="match status" value="1"/>
</dbReference>
<organism>
    <name type="scientific">Pyrenophora tritici-repentis (strain Pt-1C-BFP)</name>
    <name type="common">Wheat tan spot fungus</name>
    <name type="synonym">Drechslera tritici-repentis</name>
    <dbReference type="NCBI Taxonomy" id="426418"/>
    <lineage>
        <taxon>Eukaryota</taxon>
        <taxon>Fungi</taxon>
        <taxon>Dikarya</taxon>
        <taxon>Ascomycota</taxon>
        <taxon>Pezizomycotina</taxon>
        <taxon>Dothideomycetes</taxon>
        <taxon>Pleosporomycetidae</taxon>
        <taxon>Pleosporales</taxon>
        <taxon>Pleosporineae</taxon>
        <taxon>Pleosporaceae</taxon>
        <taxon>Pyrenophora</taxon>
    </lineage>
</organism>
<evidence type="ECO:0000255" key="1">
    <source>
        <dbReference type="HAMAP-Rule" id="MF_03048"/>
    </source>
</evidence>
<keyword id="KW-0963">Cytoplasm</keyword>
<keyword id="KW-1017">Isopeptide bond</keyword>
<keyword id="KW-1185">Reference proteome</keyword>
<keyword id="KW-0819">tRNA processing</keyword>
<keyword id="KW-0833">Ubl conjugation pathway</keyword>
<proteinExistence type="inferred from homology"/>
<protein>
    <recommendedName>
        <fullName evidence="1">Ubiquitin-related modifier 1</fullName>
    </recommendedName>
</protein>
<gene>
    <name type="primary">urm1</name>
    <name type="ORF">PTRG_09732</name>
</gene>
<feature type="chain" id="PRO_0000367887" description="Ubiquitin-related modifier 1">
    <location>
        <begin position="1"/>
        <end position="107"/>
    </location>
</feature>
<feature type="modified residue" description="1-thioglycine" evidence="1">
    <location>
        <position position="107"/>
    </location>
</feature>
<feature type="cross-link" description="Glycyl lysine isopeptide (Gly-Lys) (interchain with K-? in acceptor proteins)" evidence="1">
    <location>
        <position position="107"/>
    </location>
</feature>
<comment type="function">
    <text evidence="1">Acts as a sulfur carrier required for 2-thiolation of mcm(5)S(2)U at tRNA wobble positions of cytosolic tRNA(Lys), tRNA(Glu) and tRNA(Gln). Serves as sulfur donor in tRNA 2-thiolation reaction by being thiocarboxylated (-COSH) at its C-terminus by the MOCS3 homolog UBA4. The sulfur is then transferred to tRNA to form 2-thiolation of mcm(5)S(2)U. Prior mcm(5) tRNA modification by the elongator complex is required for 2-thiolation. Also acts as a ubiquitin-like protein (UBL) that is covalently conjugated via an isopeptide bond to lysine residues of target proteins such as AHP1. The thiocarboxylated form serves as substrate for conjugation and oxidative stress specifically induces the formation of UBL-protein conjugates.</text>
</comment>
<comment type="pathway">
    <text evidence="1">tRNA modification; 5-methoxycarbonylmethyl-2-thiouridine-tRNA biosynthesis.</text>
</comment>
<comment type="subcellular location">
    <subcellularLocation>
        <location evidence="1">Cytoplasm</location>
    </subcellularLocation>
</comment>
<comment type="PTM">
    <text evidence="1">C-terminal thiocarboxylation occurs in 2 steps, it is first acyl-adenylated (-COAMP) via the hesA/moeB/thiF part of UBA4, then thiocarboxylated (-COSH) via the rhodanese domain of UBA4.</text>
</comment>
<comment type="similarity">
    <text evidence="1">Belongs to the URM1 family.</text>
</comment>
<name>URM1_PYRTR</name>
<reference key="1">
    <citation type="journal article" date="2013" name="G3 (Bethesda)">
        <title>Comparative genomics of a plant-pathogenic fungus, Pyrenophora tritici-repentis, reveals transduplication and the impact of repeat elements on pathogenicity and population divergence.</title>
        <authorList>
            <person name="Manning V.A."/>
            <person name="Pandelova I."/>
            <person name="Dhillon B."/>
            <person name="Wilhelm L.J."/>
            <person name="Goodwin S.B."/>
            <person name="Berlin A.M."/>
            <person name="Figueroa M."/>
            <person name="Freitag M."/>
            <person name="Hane J.K."/>
            <person name="Henrissat B."/>
            <person name="Holman W.H."/>
            <person name="Kodira C.D."/>
            <person name="Martin J."/>
            <person name="Oliver R.P."/>
            <person name="Robbertse B."/>
            <person name="Schackwitz W."/>
            <person name="Schwartz D.C."/>
            <person name="Spatafora J.W."/>
            <person name="Turgeon B.G."/>
            <person name="Yandava C."/>
            <person name="Young S."/>
            <person name="Zhou S."/>
            <person name="Zeng Q."/>
            <person name="Grigoriev I.V."/>
            <person name="Ma L.-J."/>
            <person name="Ciuffetti L.M."/>
        </authorList>
    </citation>
    <scope>NUCLEOTIDE SEQUENCE [LARGE SCALE GENOMIC DNA]</scope>
    <source>
        <strain>Pt-1C-BFP</strain>
    </source>
</reference>